<proteinExistence type="evidence at transcript level"/>
<evidence type="ECO:0000250" key="1"/>
<evidence type="ECO:0000255" key="2"/>
<evidence type="ECO:0000305" key="3"/>
<comment type="function">
    <text evidence="1">Hormone found in the sinus gland of isopods and decapods which controls the blood sugar level. Has a secretagogue action over the amylase released from the midgut gland. May act as a stress hormone and may be involved in the control of molting and reproduction (By similarity).</text>
</comment>
<comment type="subcellular location">
    <subcellularLocation>
        <location>Secreted</location>
    </subcellularLocation>
</comment>
<comment type="tissue specificity">
    <text>Produced by the medulla terminalis X-organ in the eyestalks and transported to the sinus gland where they are stored and released.</text>
</comment>
<comment type="similarity">
    <text evidence="3">Belongs to the arthropod CHH/MIH/GIH/VIH hormone family.</text>
</comment>
<reference key="1">
    <citation type="submission" date="1998-08" db="EMBL/GenBank/DDBJ databases">
        <title>Characterization of crustacean hyperglycemic hormone (CHH) mRNA transcripts and genomic sequences in Macrobrachium lanchesteri (de Man).</title>
        <authorList>
            <person name="Ju B."/>
            <person name="Khoo H.-W."/>
        </authorList>
    </citation>
    <scope>NUCLEOTIDE SEQUENCE [GENOMIC DNA]</scope>
</reference>
<sequence>MIRSSVMGPTMFLVVLLLIASHQTSAWSLDGLARIEKLLSTSSSASAASPTRGQALNLKKRAILDQSCKGIFDRELFKKLDRVCDDCYNLYRKPYVAIDCREGCYQNLVFRQCIQDLQLMDQLDEYANAVQIVGK</sequence>
<name>CHH_MACLE</name>
<accession>O77220</accession>
<keyword id="KW-0027">Amidation</keyword>
<keyword id="KW-0119">Carbohydrate metabolism</keyword>
<keyword id="KW-0165">Cleavage on pair of basic residues</keyword>
<keyword id="KW-1015">Disulfide bond</keyword>
<keyword id="KW-0313">Glucose metabolism</keyword>
<keyword id="KW-0372">Hormone</keyword>
<keyword id="KW-0527">Neuropeptide</keyword>
<keyword id="KW-0964">Secreted</keyword>
<keyword id="KW-0732">Signal</keyword>
<protein>
    <recommendedName>
        <fullName>Crustacean hyperglycemic hormones</fullName>
    </recommendedName>
    <component>
        <recommendedName>
            <fullName>CHH precursor-related peptide</fullName>
            <shortName>CPRP</shortName>
        </recommendedName>
    </component>
    <component>
        <recommendedName>
            <fullName>Crustacean hyperglycemic hormone</fullName>
            <shortName>CHH</shortName>
        </recommendedName>
    </component>
</protein>
<organism>
    <name type="scientific">Macrobrachium lanchesteri</name>
    <name type="common">Freshwater prawn</name>
    <name type="synonym">Palaemon lanchesteri</name>
    <dbReference type="NCBI Taxonomy" id="82204"/>
    <lineage>
        <taxon>Eukaryota</taxon>
        <taxon>Metazoa</taxon>
        <taxon>Ecdysozoa</taxon>
        <taxon>Arthropoda</taxon>
        <taxon>Crustacea</taxon>
        <taxon>Multicrustacea</taxon>
        <taxon>Malacostraca</taxon>
        <taxon>Eumalacostraca</taxon>
        <taxon>Eucarida</taxon>
        <taxon>Decapoda</taxon>
        <taxon>Pleocyemata</taxon>
        <taxon>Caridea</taxon>
        <taxon>Palaemonoidea</taxon>
        <taxon>Palaemonidae</taxon>
        <taxon>Macrobrachium</taxon>
    </lineage>
</organism>
<feature type="signal peptide" evidence="2">
    <location>
        <begin position="1"/>
        <end position="26"/>
    </location>
</feature>
<feature type="peptide" id="PRO_0000019043" description="CHH precursor-related peptide">
    <location>
        <begin position="27"/>
        <end position="58"/>
    </location>
</feature>
<feature type="peptide" id="PRO_0000019044" description="Crustacean hyperglycemic hormone">
    <location>
        <begin position="62"/>
        <end position="133"/>
    </location>
</feature>
<feature type="modified residue" description="Valine amide" evidence="1">
    <location>
        <position position="133"/>
    </location>
</feature>
<feature type="disulfide bond" evidence="1">
    <location>
        <begin position="68"/>
        <end position="104"/>
    </location>
</feature>
<feature type="disulfide bond" evidence="1">
    <location>
        <begin position="84"/>
        <end position="100"/>
    </location>
</feature>
<feature type="disulfide bond" evidence="1">
    <location>
        <begin position="87"/>
        <end position="113"/>
    </location>
</feature>
<gene>
    <name type="primary">CHH</name>
</gene>
<dbReference type="EMBL" id="AF088854">
    <property type="protein sequence ID" value="AAC36310.1"/>
    <property type="molecule type" value="Genomic_DNA"/>
</dbReference>
<dbReference type="SMR" id="O77220"/>
<dbReference type="GO" id="GO:0005576">
    <property type="term" value="C:extracellular region"/>
    <property type="evidence" value="ECO:0007669"/>
    <property type="project" value="UniProtKB-SubCell"/>
</dbReference>
<dbReference type="GO" id="GO:0005184">
    <property type="term" value="F:neuropeptide hormone activity"/>
    <property type="evidence" value="ECO:0007669"/>
    <property type="project" value="InterPro"/>
</dbReference>
<dbReference type="GO" id="GO:0007623">
    <property type="term" value="P:circadian rhythm"/>
    <property type="evidence" value="ECO:0007669"/>
    <property type="project" value="TreeGrafter"/>
</dbReference>
<dbReference type="GO" id="GO:0006006">
    <property type="term" value="P:glucose metabolic process"/>
    <property type="evidence" value="ECO:0007669"/>
    <property type="project" value="UniProtKB-KW"/>
</dbReference>
<dbReference type="GO" id="GO:0007218">
    <property type="term" value="P:neuropeptide signaling pathway"/>
    <property type="evidence" value="ECO:0007669"/>
    <property type="project" value="UniProtKB-KW"/>
</dbReference>
<dbReference type="Gene3D" id="1.10.2010.10">
    <property type="entry name" value="Crustacean CHH/MIH/GIH neurohormone"/>
    <property type="match status" value="1"/>
</dbReference>
<dbReference type="InterPro" id="IPR018251">
    <property type="entry name" value="Crust_neurhormone_CS"/>
</dbReference>
<dbReference type="InterPro" id="IPR031098">
    <property type="entry name" value="Crust_neurohorm"/>
</dbReference>
<dbReference type="InterPro" id="IPR035957">
    <property type="entry name" value="Crust_neurohorm_sf"/>
</dbReference>
<dbReference type="InterPro" id="IPR001166">
    <property type="entry name" value="Hyperglycemic"/>
</dbReference>
<dbReference type="InterPro" id="IPR000346">
    <property type="entry name" value="Hyperglycemic1"/>
</dbReference>
<dbReference type="PANTHER" id="PTHR35981">
    <property type="entry name" value="ION TRANSPORT PEPTIDE, ISOFORM C"/>
    <property type="match status" value="1"/>
</dbReference>
<dbReference type="PANTHER" id="PTHR35981:SF2">
    <property type="entry name" value="ION TRANSPORT PEPTIDE, ISOFORM C"/>
    <property type="match status" value="1"/>
</dbReference>
<dbReference type="Pfam" id="PF01147">
    <property type="entry name" value="Crust_neurohorm"/>
    <property type="match status" value="1"/>
</dbReference>
<dbReference type="PRINTS" id="PR00548">
    <property type="entry name" value="HYPRGLYCEMC1"/>
</dbReference>
<dbReference type="PRINTS" id="PR00550">
    <property type="entry name" value="HYPRGLYCEMIC"/>
</dbReference>
<dbReference type="SUPFAM" id="SSF81778">
    <property type="entry name" value="Crustacean CHH/MIH/GIH neurohormone"/>
    <property type="match status" value="1"/>
</dbReference>
<dbReference type="PROSITE" id="PS01250">
    <property type="entry name" value="CHH_MIH_GIH"/>
    <property type="match status" value="1"/>
</dbReference>